<dbReference type="EMBL" id="BX950229">
    <property type="protein sequence ID" value="CAF30159.1"/>
    <property type="molecule type" value="Genomic_DNA"/>
</dbReference>
<dbReference type="SMR" id="Q6LZM1"/>
<dbReference type="STRING" id="267377.MMP0603"/>
<dbReference type="EnsemblBacteria" id="CAF30159">
    <property type="protein sequence ID" value="CAF30159"/>
    <property type="gene ID" value="MMP0603"/>
</dbReference>
<dbReference type="KEGG" id="mmp:MMP0603"/>
<dbReference type="PATRIC" id="fig|267377.15.peg.617"/>
<dbReference type="eggNOG" id="arCOG01179">
    <property type="taxonomic scope" value="Archaea"/>
</dbReference>
<dbReference type="HOGENOM" id="CLU_109098_1_2_2"/>
<dbReference type="OrthoDB" id="2586at2157"/>
<dbReference type="Proteomes" id="UP000000590">
    <property type="component" value="Chromosome"/>
</dbReference>
<dbReference type="GO" id="GO:0003723">
    <property type="term" value="F:RNA binding"/>
    <property type="evidence" value="ECO:0007669"/>
    <property type="project" value="InterPro"/>
</dbReference>
<dbReference type="GO" id="GO:0003743">
    <property type="term" value="F:translation initiation factor activity"/>
    <property type="evidence" value="ECO:0007669"/>
    <property type="project" value="UniProtKB-UniRule"/>
</dbReference>
<dbReference type="CDD" id="cd05793">
    <property type="entry name" value="S1_IF1A"/>
    <property type="match status" value="1"/>
</dbReference>
<dbReference type="Gene3D" id="2.40.50.140">
    <property type="entry name" value="Nucleic acid-binding proteins"/>
    <property type="match status" value="1"/>
</dbReference>
<dbReference type="HAMAP" id="MF_00216">
    <property type="entry name" value="aIF_1A"/>
    <property type="match status" value="1"/>
</dbReference>
<dbReference type="InterPro" id="IPR012340">
    <property type="entry name" value="NA-bd_OB-fold"/>
</dbReference>
<dbReference type="InterPro" id="IPR006196">
    <property type="entry name" value="RNA-binding_domain_S1_IF1"/>
</dbReference>
<dbReference type="InterPro" id="IPR001253">
    <property type="entry name" value="TIF_eIF-1A"/>
</dbReference>
<dbReference type="InterPro" id="IPR018104">
    <property type="entry name" value="TIF_eIF-1A_CS"/>
</dbReference>
<dbReference type="NCBIfam" id="TIGR00523">
    <property type="entry name" value="eIF-1A"/>
    <property type="match status" value="1"/>
</dbReference>
<dbReference type="NCBIfam" id="NF003084">
    <property type="entry name" value="PRK04012.1-3"/>
    <property type="match status" value="1"/>
</dbReference>
<dbReference type="NCBIfam" id="NF003085">
    <property type="entry name" value="PRK04012.1-5"/>
    <property type="match status" value="1"/>
</dbReference>
<dbReference type="PANTHER" id="PTHR21668">
    <property type="entry name" value="EIF-1A"/>
    <property type="match status" value="1"/>
</dbReference>
<dbReference type="Pfam" id="PF01176">
    <property type="entry name" value="eIF-1a"/>
    <property type="match status" value="1"/>
</dbReference>
<dbReference type="SMART" id="SM00652">
    <property type="entry name" value="eIF1a"/>
    <property type="match status" value="1"/>
</dbReference>
<dbReference type="SUPFAM" id="SSF50249">
    <property type="entry name" value="Nucleic acid-binding proteins"/>
    <property type="match status" value="1"/>
</dbReference>
<dbReference type="PROSITE" id="PS01262">
    <property type="entry name" value="IF1A"/>
    <property type="match status" value="1"/>
</dbReference>
<dbReference type="PROSITE" id="PS50832">
    <property type="entry name" value="S1_IF1_TYPE"/>
    <property type="match status" value="1"/>
</dbReference>
<gene>
    <name evidence="1" type="primary">eif1a</name>
    <name type="ordered locus">MMP0603</name>
</gene>
<name>IF1A_METMP</name>
<proteinExistence type="inferred from homology"/>
<feature type="chain" id="PRO_0000145125" description="Translation initiation factor 1A">
    <location>
        <begin position="1"/>
        <end position="104"/>
    </location>
</feature>
<feature type="domain" description="S1-like" evidence="1">
    <location>
        <begin position="12"/>
        <end position="87"/>
    </location>
</feature>
<feature type="region of interest" description="Disordered" evidence="2">
    <location>
        <begin position="1"/>
        <end position="20"/>
    </location>
</feature>
<feature type="compositionally biased region" description="Low complexity" evidence="2">
    <location>
        <begin position="1"/>
        <end position="14"/>
    </location>
</feature>
<reference key="1">
    <citation type="journal article" date="2004" name="J. Bacteriol.">
        <title>Complete genome sequence of the genetically tractable hydrogenotrophic methanogen Methanococcus maripaludis.</title>
        <authorList>
            <person name="Hendrickson E.L."/>
            <person name="Kaul R."/>
            <person name="Zhou Y."/>
            <person name="Bovee D."/>
            <person name="Chapman P."/>
            <person name="Chung J."/>
            <person name="Conway de Macario E."/>
            <person name="Dodsworth J.A."/>
            <person name="Gillett W."/>
            <person name="Graham D.E."/>
            <person name="Hackett M."/>
            <person name="Haydock A.K."/>
            <person name="Kang A."/>
            <person name="Land M.L."/>
            <person name="Levy R."/>
            <person name="Lie T.J."/>
            <person name="Major T.A."/>
            <person name="Moore B.C."/>
            <person name="Porat I."/>
            <person name="Palmeiri A."/>
            <person name="Rouse G."/>
            <person name="Saenphimmachak C."/>
            <person name="Soell D."/>
            <person name="Van Dien S."/>
            <person name="Wang T."/>
            <person name="Whitman W.B."/>
            <person name="Xia Q."/>
            <person name="Zhang Y."/>
            <person name="Larimer F.W."/>
            <person name="Olson M.V."/>
            <person name="Leigh J.A."/>
        </authorList>
    </citation>
    <scope>NUCLEOTIDE SEQUENCE [LARGE SCALE GENOMIC DNA]</scope>
    <source>
        <strain>DSM 14266 / JCM 13030 / NBRC 101832 / S2 / LL</strain>
    </source>
</reference>
<keyword id="KW-0396">Initiation factor</keyword>
<keyword id="KW-0648">Protein biosynthesis</keyword>
<keyword id="KW-1185">Reference proteome</keyword>
<sequence length="104" mass="12355">MRGQQTPPQQPTRVRTPRENENEVLGVIEQMLGASRVRVRCMDGKLRMGRIPGKLKRKIWVREDDVVIVTPWEVQSDEKCDVIWRYTKGQVDWLNRKGYLDFMR</sequence>
<organism>
    <name type="scientific">Methanococcus maripaludis (strain DSM 14266 / JCM 13030 / NBRC 101832 / S2 / LL)</name>
    <dbReference type="NCBI Taxonomy" id="267377"/>
    <lineage>
        <taxon>Archaea</taxon>
        <taxon>Methanobacteriati</taxon>
        <taxon>Methanobacteriota</taxon>
        <taxon>Methanomada group</taxon>
        <taxon>Methanococci</taxon>
        <taxon>Methanococcales</taxon>
        <taxon>Methanococcaceae</taxon>
        <taxon>Methanococcus</taxon>
    </lineage>
</organism>
<accession>Q6LZM1</accession>
<evidence type="ECO:0000255" key="1">
    <source>
        <dbReference type="HAMAP-Rule" id="MF_00216"/>
    </source>
</evidence>
<evidence type="ECO:0000256" key="2">
    <source>
        <dbReference type="SAM" id="MobiDB-lite"/>
    </source>
</evidence>
<protein>
    <recommendedName>
        <fullName evidence="1">Translation initiation factor 1A</fullName>
        <shortName evidence="1">aIF-1A</shortName>
    </recommendedName>
</protein>
<comment type="function">
    <text evidence="1">Seems to be required for maximal rate of protein biosynthesis. Enhances ribosome dissociation into subunits and stabilizes the binding of the initiator Met-tRNA(I) to 40 S ribosomal subunits.</text>
</comment>
<comment type="similarity">
    <text evidence="1">Belongs to the eIF-1A family.</text>
</comment>